<name>PUR5_SHESM</name>
<comment type="catalytic activity">
    <reaction evidence="1">
        <text>2-formamido-N(1)-(5-O-phospho-beta-D-ribosyl)acetamidine + ATP = 5-amino-1-(5-phospho-beta-D-ribosyl)imidazole + ADP + phosphate + H(+)</text>
        <dbReference type="Rhea" id="RHEA:23032"/>
        <dbReference type="ChEBI" id="CHEBI:15378"/>
        <dbReference type="ChEBI" id="CHEBI:30616"/>
        <dbReference type="ChEBI" id="CHEBI:43474"/>
        <dbReference type="ChEBI" id="CHEBI:137981"/>
        <dbReference type="ChEBI" id="CHEBI:147287"/>
        <dbReference type="ChEBI" id="CHEBI:456216"/>
        <dbReference type="EC" id="6.3.3.1"/>
    </reaction>
</comment>
<comment type="pathway">
    <text evidence="1">Purine metabolism; IMP biosynthesis via de novo pathway; 5-amino-1-(5-phospho-D-ribosyl)imidazole from N(2)-formyl-N(1)-(5-phospho-D-ribosyl)glycinamide: step 2/2.</text>
</comment>
<comment type="subcellular location">
    <subcellularLocation>
        <location evidence="1">Cytoplasm</location>
    </subcellularLocation>
</comment>
<comment type="similarity">
    <text evidence="1">Belongs to the AIR synthase family.</text>
</comment>
<keyword id="KW-0067">ATP-binding</keyword>
<keyword id="KW-0963">Cytoplasm</keyword>
<keyword id="KW-0436">Ligase</keyword>
<keyword id="KW-0547">Nucleotide-binding</keyword>
<keyword id="KW-0658">Purine biosynthesis</keyword>
<feature type="chain" id="PRO_1000046469" description="Phosphoribosylformylglycinamidine cyclo-ligase">
    <location>
        <begin position="1"/>
        <end position="345"/>
    </location>
</feature>
<gene>
    <name evidence="1" type="primary">purM</name>
    <name type="ordered locus">Shewmr4_2380</name>
</gene>
<accession>Q0HHL6</accession>
<reference key="1">
    <citation type="submission" date="2006-08" db="EMBL/GenBank/DDBJ databases">
        <title>Complete sequence of Shewanella sp. MR-4.</title>
        <authorList>
            <consortium name="US DOE Joint Genome Institute"/>
            <person name="Copeland A."/>
            <person name="Lucas S."/>
            <person name="Lapidus A."/>
            <person name="Barry K."/>
            <person name="Detter J.C."/>
            <person name="Glavina del Rio T."/>
            <person name="Hammon N."/>
            <person name="Israni S."/>
            <person name="Dalin E."/>
            <person name="Tice H."/>
            <person name="Pitluck S."/>
            <person name="Kiss H."/>
            <person name="Brettin T."/>
            <person name="Bruce D."/>
            <person name="Han C."/>
            <person name="Tapia R."/>
            <person name="Gilna P."/>
            <person name="Schmutz J."/>
            <person name="Larimer F."/>
            <person name="Land M."/>
            <person name="Hauser L."/>
            <person name="Kyrpides N."/>
            <person name="Mikhailova N."/>
            <person name="Nealson K."/>
            <person name="Konstantinidis K."/>
            <person name="Klappenbach J."/>
            <person name="Tiedje J."/>
            <person name="Richardson P."/>
        </authorList>
    </citation>
    <scope>NUCLEOTIDE SEQUENCE [LARGE SCALE GENOMIC DNA]</scope>
    <source>
        <strain>MR-4</strain>
    </source>
</reference>
<dbReference type="EC" id="6.3.3.1" evidence="1"/>
<dbReference type="EMBL" id="CP000446">
    <property type="protein sequence ID" value="ABI39451.1"/>
    <property type="molecule type" value="Genomic_DNA"/>
</dbReference>
<dbReference type="RefSeq" id="WP_011623139.1">
    <property type="nucleotide sequence ID" value="NC_008321.1"/>
</dbReference>
<dbReference type="SMR" id="Q0HHL6"/>
<dbReference type="GeneID" id="75188443"/>
<dbReference type="KEGG" id="she:Shewmr4_2380"/>
<dbReference type="HOGENOM" id="CLU_047116_0_0_6"/>
<dbReference type="UniPathway" id="UPA00074">
    <property type="reaction ID" value="UER00129"/>
</dbReference>
<dbReference type="GO" id="GO:0005829">
    <property type="term" value="C:cytosol"/>
    <property type="evidence" value="ECO:0007669"/>
    <property type="project" value="TreeGrafter"/>
</dbReference>
<dbReference type="GO" id="GO:0005524">
    <property type="term" value="F:ATP binding"/>
    <property type="evidence" value="ECO:0007669"/>
    <property type="project" value="UniProtKB-KW"/>
</dbReference>
<dbReference type="GO" id="GO:0004637">
    <property type="term" value="F:phosphoribosylamine-glycine ligase activity"/>
    <property type="evidence" value="ECO:0007669"/>
    <property type="project" value="TreeGrafter"/>
</dbReference>
<dbReference type="GO" id="GO:0004641">
    <property type="term" value="F:phosphoribosylformylglycinamidine cyclo-ligase activity"/>
    <property type="evidence" value="ECO:0007669"/>
    <property type="project" value="UniProtKB-UniRule"/>
</dbReference>
<dbReference type="GO" id="GO:0006189">
    <property type="term" value="P:'de novo' IMP biosynthetic process"/>
    <property type="evidence" value="ECO:0007669"/>
    <property type="project" value="UniProtKB-UniRule"/>
</dbReference>
<dbReference type="GO" id="GO:0046084">
    <property type="term" value="P:adenine biosynthetic process"/>
    <property type="evidence" value="ECO:0007669"/>
    <property type="project" value="TreeGrafter"/>
</dbReference>
<dbReference type="CDD" id="cd02196">
    <property type="entry name" value="PurM"/>
    <property type="match status" value="1"/>
</dbReference>
<dbReference type="FunFam" id="3.30.1330.10:FF:000001">
    <property type="entry name" value="Phosphoribosylformylglycinamidine cyclo-ligase"/>
    <property type="match status" value="1"/>
</dbReference>
<dbReference type="FunFam" id="3.90.650.10:FF:000001">
    <property type="entry name" value="Phosphoribosylformylglycinamidine cyclo-ligase"/>
    <property type="match status" value="1"/>
</dbReference>
<dbReference type="Gene3D" id="3.90.650.10">
    <property type="entry name" value="PurM-like C-terminal domain"/>
    <property type="match status" value="1"/>
</dbReference>
<dbReference type="Gene3D" id="3.30.1330.10">
    <property type="entry name" value="PurM-like, N-terminal domain"/>
    <property type="match status" value="1"/>
</dbReference>
<dbReference type="HAMAP" id="MF_00741">
    <property type="entry name" value="AIRS"/>
    <property type="match status" value="1"/>
</dbReference>
<dbReference type="InterPro" id="IPR010918">
    <property type="entry name" value="PurM-like_C_dom"/>
</dbReference>
<dbReference type="InterPro" id="IPR036676">
    <property type="entry name" value="PurM-like_C_sf"/>
</dbReference>
<dbReference type="InterPro" id="IPR016188">
    <property type="entry name" value="PurM-like_N"/>
</dbReference>
<dbReference type="InterPro" id="IPR036921">
    <property type="entry name" value="PurM-like_N_sf"/>
</dbReference>
<dbReference type="InterPro" id="IPR004733">
    <property type="entry name" value="PurM_cligase"/>
</dbReference>
<dbReference type="NCBIfam" id="TIGR00878">
    <property type="entry name" value="purM"/>
    <property type="match status" value="1"/>
</dbReference>
<dbReference type="PANTHER" id="PTHR10520:SF12">
    <property type="entry name" value="TRIFUNCTIONAL PURINE BIOSYNTHETIC PROTEIN ADENOSINE-3"/>
    <property type="match status" value="1"/>
</dbReference>
<dbReference type="PANTHER" id="PTHR10520">
    <property type="entry name" value="TRIFUNCTIONAL PURINE BIOSYNTHETIC PROTEIN ADENOSINE-3-RELATED"/>
    <property type="match status" value="1"/>
</dbReference>
<dbReference type="Pfam" id="PF00586">
    <property type="entry name" value="AIRS"/>
    <property type="match status" value="1"/>
</dbReference>
<dbReference type="Pfam" id="PF02769">
    <property type="entry name" value="AIRS_C"/>
    <property type="match status" value="1"/>
</dbReference>
<dbReference type="SUPFAM" id="SSF56042">
    <property type="entry name" value="PurM C-terminal domain-like"/>
    <property type="match status" value="1"/>
</dbReference>
<dbReference type="SUPFAM" id="SSF55326">
    <property type="entry name" value="PurM N-terminal domain-like"/>
    <property type="match status" value="1"/>
</dbReference>
<evidence type="ECO:0000255" key="1">
    <source>
        <dbReference type="HAMAP-Rule" id="MF_00741"/>
    </source>
</evidence>
<sequence>MSTPTPLSYKDAGVDIDAGNALVSNIKAAVKRTRRPEVMGNLGGFGALCELPTKYKQPVLVSGTDGVGTKLRLAIDYKKHDTVGIDLVAMCVNDLIVQGAEPLFFLDYYATGKLDVETATSVVNGIGEGCFQSGCALIGGETAEMPGMYEGEDYDLAGFCVGVVEKADIIDGSKVAAGDALIALASSGPHSNGYSLVRKVLEVSQADPQQDLNGKPLIQHLLEPTKIYVKSLLKLIEASDVHAMAHITGGGFWENIPRVLPENCKAVIQGDSWQWPAVFNWLMENGNIAEYEMYRTFNCGVGMIVALPADKVDAALALLAAEGEQAWLIGAIAAREGNEEQVEIL</sequence>
<proteinExistence type="inferred from homology"/>
<organism>
    <name type="scientific">Shewanella sp. (strain MR-4)</name>
    <dbReference type="NCBI Taxonomy" id="60480"/>
    <lineage>
        <taxon>Bacteria</taxon>
        <taxon>Pseudomonadati</taxon>
        <taxon>Pseudomonadota</taxon>
        <taxon>Gammaproteobacteria</taxon>
        <taxon>Alteromonadales</taxon>
        <taxon>Shewanellaceae</taxon>
        <taxon>Shewanella</taxon>
    </lineage>
</organism>
<protein>
    <recommendedName>
        <fullName evidence="1">Phosphoribosylformylglycinamidine cyclo-ligase</fullName>
        <ecNumber evidence="1">6.3.3.1</ecNumber>
    </recommendedName>
    <alternativeName>
        <fullName evidence="1">AIR synthase</fullName>
    </alternativeName>
    <alternativeName>
        <fullName evidence="1">AIRS</fullName>
    </alternativeName>
    <alternativeName>
        <fullName evidence="1">Phosphoribosyl-aminoimidazole synthetase</fullName>
    </alternativeName>
</protein>